<gene>
    <name evidence="1" type="primary">hisA</name>
    <name type="ordered locus">AB57_3687</name>
</gene>
<dbReference type="EC" id="5.3.1.16" evidence="1"/>
<dbReference type="EMBL" id="CP001182">
    <property type="protein sequence ID" value="ACJ43045.1"/>
    <property type="molecule type" value="Genomic_DNA"/>
</dbReference>
<dbReference type="RefSeq" id="WP_000905538.1">
    <property type="nucleotide sequence ID" value="NC_011586.2"/>
</dbReference>
<dbReference type="SMR" id="B7IBD1"/>
<dbReference type="GeneID" id="92895476"/>
<dbReference type="KEGG" id="abn:AB57_3687"/>
<dbReference type="HOGENOM" id="CLU_048577_1_1_6"/>
<dbReference type="UniPathway" id="UPA00031">
    <property type="reaction ID" value="UER00009"/>
</dbReference>
<dbReference type="Proteomes" id="UP000007094">
    <property type="component" value="Chromosome"/>
</dbReference>
<dbReference type="GO" id="GO:0005737">
    <property type="term" value="C:cytoplasm"/>
    <property type="evidence" value="ECO:0007669"/>
    <property type="project" value="UniProtKB-SubCell"/>
</dbReference>
<dbReference type="GO" id="GO:0003949">
    <property type="term" value="F:1-(5-phosphoribosyl)-5-[(5-phosphoribosylamino)methylideneamino]imidazole-4-carboxamide isomerase activity"/>
    <property type="evidence" value="ECO:0007669"/>
    <property type="project" value="UniProtKB-UniRule"/>
</dbReference>
<dbReference type="GO" id="GO:0000105">
    <property type="term" value="P:L-histidine biosynthetic process"/>
    <property type="evidence" value="ECO:0007669"/>
    <property type="project" value="UniProtKB-UniRule"/>
</dbReference>
<dbReference type="GO" id="GO:0000162">
    <property type="term" value="P:L-tryptophan biosynthetic process"/>
    <property type="evidence" value="ECO:0007669"/>
    <property type="project" value="TreeGrafter"/>
</dbReference>
<dbReference type="CDD" id="cd04732">
    <property type="entry name" value="HisA"/>
    <property type="match status" value="1"/>
</dbReference>
<dbReference type="FunFam" id="3.20.20.70:FF:000009">
    <property type="entry name" value="1-(5-phosphoribosyl)-5-[(5-phosphoribosylamino)methylideneamino] imidazole-4-carboxamide isomerase"/>
    <property type="match status" value="1"/>
</dbReference>
<dbReference type="Gene3D" id="3.20.20.70">
    <property type="entry name" value="Aldolase class I"/>
    <property type="match status" value="1"/>
</dbReference>
<dbReference type="HAMAP" id="MF_01014">
    <property type="entry name" value="HisA"/>
    <property type="match status" value="1"/>
</dbReference>
<dbReference type="InterPro" id="IPR013785">
    <property type="entry name" value="Aldolase_TIM"/>
</dbReference>
<dbReference type="InterPro" id="IPR006062">
    <property type="entry name" value="His_biosynth"/>
</dbReference>
<dbReference type="InterPro" id="IPR006063">
    <property type="entry name" value="HisA_bact_arch"/>
</dbReference>
<dbReference type="InterPro" id="IPR044524">
    <property type="entry name" value="Isoase_HisA-like"/>
</dbReference>
<dbReference type="InterPro" id="IPR023016">
    <property type="entry name" value="Isoase_HisA-like_bact"/>
</dbReference>
<dbReference type="InterPro" id="IPR011060">
    <property type="entry name" value="RibuloseP-bd_barrel"/>
</dbReference>
<dbReference type="NCBIfam" id="TIGR00007">
    <property type="entry name" value="1-(5-phosphoribosyl)-5-[(5-phosphoribosylamino)methylideneamino]imidazole-4-carboxamide isomerase"/>
    <property type="match status" value="1"/>
</dbReference>
<dbReference type="PANTHER" id="PTHR43090">
    <property type="entry name" value="1-(5-PHOSPHORIBOSYL)-5-[(5-PHOSPHORIBOSYLAMINO)METHYLIDENEAMINO] IMIDAZOLE-4-CARBOXAMIDE ISOMERASE"/>
    <property type="match status" value="1"/>
</dbReference>
<dbReference type="PANTHER" id="PTHR43090:SF2">
    <property type="entry name" value="1-(5-PHOSPHORIBOSYL)-5-[(5-PHOSPHORIBOSYLAMINO)METHYLIDENEAMINO] IMIDAZOLE-4-CARBOXAMIDE ISOMERASE"/>
    <property type="match status" value="1"/>
</dbReference>
<dbReference type="Pfam" id="PF00977">
    <property type="entry name" value="His_biosynth"/>
    <property type="match status" value="1"/>
</dbReference>
<dbReference type="SUPFAM" id="SSF51366">
    <property type="entry name" value="Ribulose-phoshate binding barrel"/>
    <property type="match status" value="1"/>
</dbReference>
<protein>
    <recommendedName>
        <fullName evidence="1">1-(5-phosphoribosyl)-5-[(5-phosphoribosylamino)methylideneamino] imidazole-4-carboxamide isomerase</fullName>
        <ecNumber evidence="1">5.3.1.16</ecNumber>
    </recommendedName>
    <alternativeName>
        <fullName evidence="1">Phosphoribosylformimino-5-aminoimidazole carboxamide ribotide isomerase</fullName>
    </alternativeName>
</protein>
<name>HIS4_ACIB5</name>
<feature type="chain" id="PRO_1000135066" description="1-(5-phosphoribosyl)-5-[(5-phosphoribosylamino)methylideneamino] imidazole-4-carboxamide isomerase">
    <location>
        <begin position="1"/>
        <end position="243"/>
    </location>
</feature>
<feature type="active site" description="Proton acceptor" evidence="1">
    <location>
        <position position="8"/>
    </location>
</feature>
<feature type="active site" description="Proton donor" evidence="1">
    <location>
        <position position="130"/>
    </location>
</feature>
<evidence type="ECO:0000255" key="1">
    <source>
        <dbReference type="HAMAP-Rule" id="MF_01014"/>
    </source>
</evidence>
<keyword id="KW-0028">Amino-acid biosynthesis</keyword>
<keyword id="KW-0963">Cytoplasm</keyword>
<keyword id="KW-0368">Histidine biosynthesis</keyword>
<keyword id="KW-0413">Isomerase</keyword>
<accession>B7IBD1</accession>
<organism>
    <name type="scientific">Acinetobacter baumannii (strain AB0057)</name>
    <dbReference type="NCBI Taxonomy" id="480119"/>
    <lineage>
        <taxon>Bacteria</taxon>
        <taxon>Pseudomonadati</taxon>
        <taxon>Pseudomonadota</taxon>
        <taxon>Gammaproteobacteria</taxon>
        <taxon>Moraxellales</taxon>
        <taxon>Moraxellaceae</taxon>
        <taxon>Acinetobacter</taxon>
        <taxon>Acinetobacter calcoaceticus/baumannii complex</taxon>
    </lineage>
</organism>
<proteinExistence type="inferred from homology"/>
<sequence length="243" mass="26083">MLIIPAIDLKDGKCVRLKQGRMEDDTVFSDDPVATAQHWVNEGARRLHLVDLNGAFAGTPIHKPVVEAIAKAQPELPIQIGGGIRSLETIEHYLEAGVTFVIIGTKAVQEPEFVEEACKRFAGHIIVGIDAMNGMVATDGWANVTDVKATDLAKRFADAGVSSIVYTDIARDGMMQGVNVEQTVNLAQYSGLPVIASGGVTNLDDVRNLKGQPGILGAITGRAIYEGTLNLREAQLLLDENRL</sequence>
<comment type="catalytic activity">
    <reaction evidence="1">
        <text>1-(5-phospho-beta-D-ribosyl)-5-[(5-phospho-beta-D-ribosylamino)methylideneamino]imidazole-4-carboxamide = 5-[(5-phospho-1-deoxy-D-ribulos-1-ylimino)methylamino]-1-(5-phospho-beta-D-ribosyl)imidazole-4-carboxamide</text>
        <dbReference type="Rhea" id="RHEA:15469"/>
        <dbReference type="ChEBI" id="CHEBI:58435"/>
        <dbReference type="ChEBI" id="CHEBI:58525"/>
        <dbReference type="EC" id="5.3.1.16"/>
    </reaction>
</comment>
<comment type="pathway">
    <text evidence="1">Amino-acid biosynthesis; L-histidine biosynthesis; L-histidine from 5-phospho-alpha-D-ribose 1-diphosphate: step 4/9.</text>
</comment>
<comment type="subcellular location">
    <subcellularLocation>
        <location evidence="1">Cytoplasm</location>
    </subcellularLocation>
</comment>
<comment type="similarity">
    <text evidence="1">Belongs to the HisA/HisF family.</text>
</comment>
<reference key="1">
    <citation type="journal article" date="2008" name="J. Bacteriol.">
        <title>Comparative genome sequence analysis of multidrug-resistant Acinetobacter baumannii.</title>
        <authorList>
            <person name="Adams M.D."/>
            <person name="Goglin K."/>
            <person name="Molyneaux N."/>
            <person name="Hujer K.M."/>
            <person name="Lavender H."/>
            <person name="Jamison J.J."/>
            <person name="MacDonald I.J."/>
            <person name="Martin K.M."/>
            <person name="Russo T."/>
            <person name="Campagnari A.A."/>
            <person name="Hujer A.M."/>
            <person name="Bonomo R.A."/>
            <person name="Gill S.R."/>
        </authorList>
    </citation>
    <scope>NUCLEOTIDE SEQUENCE [LARGE SCALE GENOMIC DNA]</scope>
    <source>
        <strain>AB0057</strain>
    </source>
</reference>